<comment type="function">
    <text evidence="1">One of several proteins that assist in the late maturation steps of the functional core of the 30S ribosomal subunit. Associates with free 30S ribosomal subunits (but not with 30S subunits that are part of 70S ribosomes or polysomes). Required for efficient processing of 16S rRNA. May interact with the 5'-terminal helix region of 16S rRNA.</text>
</comment>
<comment type="subunit">
    <text evidence="1">Monomer. Binds 30S ribosomal subunits, but not 50S ribosomal subunits or 70S ribosomes.</text>
</comment>
<comment type="subcellular location">
    <subcellularLocation>
        <location evidence="1">Cytoplasm</location>
    </subcellularLocation>
</comment>
<comment type="similarity">
    <text evidence="1">Belongs to the RbfA family.</text>
</comment>
<organism>
    <name type="scientific">Bordetella pertussis (strain Tohama I / ATCC BAA-589 / NCTC 13251)</name>
    <dbReference type="NCBI Taxonomy" id="257313"/>
    <lineage>
        <taxon>Bacteria</taxon>
        <taxon>Pseudomonadati</taxon>
        <taxon>Pseudomonadota</taxon>
        <taxon>Betaproteobacteria</taxon>
        <taxon>Burkholderiales</taxon>
        <taxon>Alcaligenaceae</taxon>
        <taxon>Bordetella</taxon>
    </lineage>
</organism>
<accession>Q7VYR1</accession>
<evidence type="ECO:0000255" key="1">
    <source>
        <dbReference type="HAMAP-Rule" id="MF_00003"/>
    </source>
</evidence>
<name>RBFA_BORPE</name>
<proteinExistence type="inferred from homology"/>
<keyword id="KW-0963">Cytoplasm</keyword>
<keyword id="KW-1185">Reference proteome</keyword>
<keyword id="KW-0690">Ribosome biogenesis</keyword>
<reference key="1">
    <citation type="journal article" date="2003" name="Nat. Genet.">
        <title>Comparative analysis of the genome sequences of Bordetella pertussis, Bordetella parapertussis and Bordetella bronchiseptica.</title>
        <authorList>
            <person name="Parkhill J."/>
            <person name="Sebaihia M."/>
            <person name="Preston A."/>
            <person name="Murphy L.D."/>
            <person name="Thomson N.R."/>
            <person name="Harris D.E."/>
            <person name="Holden M.T.G."/>
            <person name="Churcher C.M."/>
            <person name="Bentley S.D."/>
            <person name="Mungall K.L."/>
            <person name="Cerdeno-Tarraga A.-M."/>
            <person name="Temple L."/>
            <person name="James K.D."/>
            <person name="Harris B."/>
            <person name="Quail M.A."/>
            <person name="Achtman M."/>
            <person name="Atkin R."/>
            <person name="Baker S."/>
            <person name="Basham D."/>
            <person name="Bason N."/>
            <person name="Cherevach I."/>
            <person name="Chillingworth T."/>
            <person name="Collins M."/>
            <person name="Cronin A."/>
            <person name="Davis P."/>
            <person name="Doggett J."/>
            <person name="Feltwell T."/>
            <person name="Goble A."/>
            <person name="Hamlin N."/>
            <person name="Hauser H."/>
            <person name="Holroyd S."/>
            <person name="Jagels K."/>
            <person name="Leather S."/>
            <person name="Moule S."/>
            <person name="Norberczak H."/>
            <person name="O'Neil S."/>
            <person name="Ormond D."/>
            <person name="Price C."/>
            <person name="Rabbinowitsch E."/>
            <person name="Rutter S."/>
            <person name="Sanders M."/>
            <person name="Saunders D."/>
            <person name="Seeger K."/>
            <person name="Sharp S."/>
            <person name="Simmonds M."/>
            <person name="Skelton J."/>
            <person name="Squares R."/>
            <person name="Squares S."/>
            <person name="Stevens K."/>
            <person name="Unwin L."/>
            <person name="Whitehead S."/>
            <person name="Barrell B.G."/>
            <person name="Maskell D.J."/>
        </authorList>
    </citation>
    <scope>NUCLEOTIDE SEQUENCE [LARGE SCALE GENOMIC DNA]</scope>
    <source>
        <strain>Tohama I / ATCC BAA-589 / NCTC 13251</strain>
    </source>
</reference>
<protein>
    <recommendedName>
        <fullName evidence="1">Ribosome-binding factor A</fullName>
    </recommendedName>
</protein>
<gene>
    <name evidence="1" type="primary">rbfA</name>
    <name type="ordered locus">BP1248</name>
</gene>
<dbReference type="EMBL" id="BX640414">
    <property type="protein sequence ID" value="CAE41544.1"/>
    <property type="molecule type" value="Genomic_DNA"/>
</dbReference>
<dbReference type="RefSeq" id="NP_880020.1">
    <property type="nucleotide sequence ID" value="NC_002929.2"/>
</dbReference>
<dbReference type="RefSeq" id="WP_003818636.1">
    <property type="nucleotide sequence ID" value="NZ_CP039022.1"/>
</dbReference>
<dbReference type="SMR" id="Q7VYR1"/>
<dbReference type="STRING" id="257313.BP1248"/>
<dbReference type="PaxDb" id="257313-BP1248"/>
<dbReference type="GeneID" id="69601165"/>
<dbReference type="KEGG" id="bpe:BP1248"/>
<dbReference type="PATRIC" id="fig|257313.5.peg.1344"/>
<dbReference type="eggNOG" id="COG0858">
    <property type="taxonomic scope" value="Bacteria"/>
</dbReference>
<dbReference type="HOGENOM" id="CLU_089475_5_1_4"/>
<dbReference type="Proteomes" id="UP000002676">
    <property type="component" value="Chromosome"/>
</dbReference>
<dbReference type="GO" id="GO:0005829">
    <property type="term" value="C:cytosol"/>
    <property type="evidence" value="ECO:0007669"/>
    <property type="project" value="TreeGrafter"/>
</dbReference>
<dbReference type="GO" id="GO:0043024">
    <property type="term" value="F:ribosomal small subunit binding"/>
    <property type="evidence" value="ECO:0007669"/>
    <property type="project" value="TreeGrafter"/>
</dbReference>
<dbReference type="GO" id="GO:0030490">
    <property type="term" value="P:maturation of SSU-rRNA"/>
    <property type="evidence" value="ECO:0007669"/>
    <property type="project" value="UniProtKB-UniRule"/>
</dbReference>
<dbReference type="Gene3D" id="3.30.300.20">
    <property type="match status" value="1"/>
</dbReference>
<dbReference type="HAMAP" id="MF_00003">
    <property type="entry name" value="RbfA"/>
    <property type="match status" value="1"/>
</dbReference>
<dbReference type="InterPro" id="IPR015946">
    <property type="entry name" value="KH_dom-like_a/b"/>
</dbReference>
<dbReference type="InterPro" id="IPR000238">
    <property type="entry name" value="RbfA"/>
</dbReference>
<dbReference type="InterPro" id="IPR023799">
    <property type="entry name" value="RbfA_dom_sf"/>
</dbReference>
<dbReference type="NCBIfam" id="TIGR00082">
    <property type="entry name" value="rbfA"/>
    <property type="match status" value="1"/>
</dbReference>
<dbReference type="PANTHER" id="PTHR33515">
    <property type="entry name" value="RIBOSOME-BINDING FACTOR A, CHLOROPLASTIC-RELATED"/>
    <property type="match status" value="1"/>
</dbReference>
<dbReference type="PANTHER" id="PTHR33515:SF1">
    <property type="entry name" value="RIBOSOME-BINDING FACTOR A, CHLOROPLASTIC-RELATED"/>
    <property type="match status" value="1"/>
</dbReference>
<dbReference type="Pfam" id="PF02033">
    <property type="entry name" value="RBFA"/>
    <property type="match status" value="1"/>
</dbReference>
<dbReference type="SUPFAM" id="SSF89919">
    <property type="entry name" value="Ribosome-binding factor A, RbfA"/>
    <property type="match status" value="1"/>
</dbReference>
<sequence>MSRHKSKSIPGRNLRLADQIQKDLAGIIQREIDMTRAGLITLSGVELSADYAHAKVYFTVLGAEPDTAAALLNEKAGWLHSQLYKLLHIHTVPTLRFVHDPQITRGIEMSVLIDRANRPGPHSGVPDEPEDQS</sequence>
<feature type="chain" id="PRO_0000102630" description="Ribosome-binding factor A">
    <location>
        <begin position="1"/>
        <end position="133"/>
    </location>
</feature>